<name>PUP13_ARATH</name>
<organism>
    <name type="scientific">Arabidopsis thaliana</name>
    <name type="common">Mouse-ear cress</name>
    <dbReference type="NCBI Taxonomy" id="3702"/>
    <lineage>
        <taxon>Eukaryota</taxon>
        <taxon>Viridiplantae</taxon>
        <taxon>Streptophyta</taxon>
        <taxon>Embryophyta</taxon>
        <taxon>Tracheophyta</taxon>
        <taxon>Spermatophyta</taxon>
        <taxon>Magnoliopsida</taxon>
        <taxon>eudicotyledons</taxon>
        <taxon>Gunneridae</taxon>
        <taxon>Pentapetalae</taxon>
        <taxon>rosids</taxon>
        <taxon>malvids</taxon>
        <taxon>Brassicales</taxon>
        <taxon>Brassicaceae</taxon>
        <taxon>Camelineae</taxon>
        <taxon>Arabidopsis</taxon>
    </lineage>
</organism>
<keyword id="KW-0472">Membrane</keyword>
<keyword id="KW-1185">Reference proteome</keyword>
<keyword id="KW-0812">Transmembrane</keyword>
<keyword id="KW-1133">Transmembrane helix</keyword>
<keyword id="KW-0813">Transport</keyword>
<feature type="chain" id="PRO_0000317400" description="Probable purine permease 13">
    <location>
        <begin position="1"/>
        <end position="361"/>
    </location>
</feature>
<feature type="transmembrane region" description="Helical" evidence="1">
    <location>
        <begin position="35"/>
        <end position="55"/>
    </location>
</feature>
<feature type="transmembrane region" description="Helical" evidence="1">
    <location>
        <begin position="68"/>
        <end position="88"/>
    </location>
</feature>
<feature type="transmembrane region" description="Helical" evidence="1">
    <location>
        <begin position="103"/>
        <end position="123"/>
    </location>
</feature>
<feature type="transmembrane region" description="Helical" evidence="1">
    <location>
        <begin position="129"/>
        <end position="151"/>
    </location>
</feature>
<feature type="transmembrane region" description="Helical" evidence="1">
    <location>
        <begin position="156"/>
        <end position="176"/>
    </location>
</feature>
<feature type="transmembrane region" description="Helical" evidence="1">
    <location>
        <begin position="192"/>
        <end position="212"/>
    </location>
</feature>
<feature type="transmembrane region" description="Helical" evidence="1">
    <location>
        <begin position="238"/>
        <end position="258"/>
    </location>
</feature>
<feature type="transmembrane region" description="Helical" evidence="1">
    <location>
        <begin position="268"/>
        <end position="288"/>
    </location>
</feature>
<feature type="transmembrane region" description="Helical" evidence="1">
    <location>
        <begin position="289"/>
        <end position="309"/>
    </location>
</feature>
<feature type="transmembrane region" description="Helical" evidence="1">
    <location>
        <begin position="323"/>
        <end position="343"/>
    </location>
</feature>
<reference key="1">
    <citation type="journal article" date="1999" name="Nature">
        <title>Sequence and analysis of chromosome 4 of the plant Arabidopsis thaliana.</title>
        <authorList>
            <person name="Mayer K.F.X."/>
            <person name="Schueller C."/>
            <person name="Wambutt R."/>
            <person name="Murphy G."/>
            <person name="Volckaert G."/>
            <person name="Pohl T."/>
            <person name="Duesterhoeft A."/>
            <person name="Stiekema W."/>
            <person name="Entian K.-D."/>
            <person name="Terryn N."/>
            <person name="Harris B."/>
            <person name="Ansorge W."/>
            <person name="Brandt P."/>
            <person name="Grivell L.A."/>
            <person name="Rieger M."/>
            <person name="Weichselgartner M."/>
            <person name="de Simone V."/>
            <person name="Obermaier B."/>
            <person name="Mache R."/>
            <person name="Mueller M."/>
            <person name="Kreis M."/>
            <person name="Delseny M."/>
            <person name="Puigdomenech P."/>
            <person name="Watson M."/>
            <person name="Schmidtheini T."/>
            <person name="Reichert B."/>
            <person name="Portetelle D."/>
            <person name="Perez-Alonso M."/>
            <person name="Boutry M."/>
            <person name="Bancroft I."/>
            <person name="Vos P."/>
            <person name="Hoheisel J."/>
            <person name="Zimmermann W."/>
            <person name="Wedler H."/>
            <person name="Ridley P."/>
            <person name="Langham S.-A."/>
            <person name="McCullagh B."/>
            <person name="Bilham L."/>
            <person name="Robben J."/>
            <person name="van der Schueren J."/>
            <person name="Grymonprez B."/>
            <person name="Chuang Y.-J."/>
            <person name="Vandenbussche F."/>
            <person name="Braeken M."/>
            <person name="Weltjens I."/>
            <person name="Voet M."/>
            <person name="Bastiaens I."/>
            <person name="Aert R."/>
            <person name="Defoor E."/>
            <person name="Weitzenegger T."/>
            <person name="Bothe G."/>
            <person name="Ramsperger U."/>
            <person name="Hilbert H."/>
            <person name="Braun M."/>
            <person name="Holzer E."/>
            <person name="Brandt A."/>
            <person name="Peters S."/>
            <person name="van Staveren M."/>
            <person name="Dirkse W."/>
            <person name="Mooijman P."/>
            <person name="Klein Lankhorst R."/>
            <person name="Rose M."/>
            <person name="Hauf J."/>
            <person name="Koetter P."/>
            <person name="Berneiser S."/>
            <person name="Hempel S."/>
            <person name="Feldpausch M."/>
            <person name="Lamberth S."/>
            <person name="Van den Daele H."/>
            <person name="De Keyser A."/>
            <person name="Buysshaert C."/>
            <person name="Gielen J."/>
            <person name="Villarroel R."/>
            <person name="De Clercq R."/>
            <person name="van Montagu M."/>
            <person name="Rogers J."/>
            <person name="Cronin A."/>
            <person name="Quail M.A."/>
            <person name="Bray-Allen S."/>
            <person name="Clark L."/>
            <person name="Doggett J."/>
            <person name="Hall S."/>
            <person name="Kay M."/>
            <person name="Lennard N."/>
            <person name="McLay K."/>
            <person name="Mayes R."/>
            <person name="Pettett A."/>
            <person name="Rajandream M.A."/>
            <person name="Lyne M."/>
            <person name="Benes V."/>
            <person name="Rechmann S."/>
            <person name="Borkova D."/>
            <person name="Bloecker H."/>
            <person name="Scharfe M."/>
            <person name="Grimm M."/>
            <person name="Loehnert T.-H."/>
            <person name="Dose S."/>
            <person name="de Haan M."/>
            <person name="Maarse A.C."/>
            <person name="Schaefer M."/>
            <person name="Mueller-Auer S."/>
            <person name="Gabel C."/>
            <person name="Fuchs M."/>
            <person name="Fartmann B."/>
            <person name="Granderath K."/>
            <person name="Dauner D."/>
            <person name="Herzl A."/>
            <person name="Neumann S."/>
            <person name="Argiriou A."/>
            <person name="Vitale D."/>
            <person name="Liguori R."/>
            <person name="Piravandi E."/>
            <person name="Massenet O."/>
            <person name="Quigley F."/>
            <person name="Clabauld G."/>
            <person name="Muendlein A."/>
            <person name="Felber R."/>
            <person name="Schnabl S."/>
            <person name="Hiller R."/>
            <person name="Schmidt W."/>
            <person name="Lecharny A."/>
            <person name="Aubourg S."/>
            <person name="Chefdor F."/>
            <person name="Cooke R."/>
            <person name="Berger C."/>
            <person name="Monfort A."/>
            <person name="Casacuberta E."/>
            <person name="Gibbons T."/>
            <person name="Weber N."/>
            <person name="Vandenbol M."/>
            <person name="Bargues M."/>
            <person name="Terol J."/>
            <person name="Torres A."/>
            <person name="Perez-Perez A."/>
            <person name="Purnelle B."/>
            <person name="Bent E."/>
            <person name="Johnson S."/>
            <person name="Tacon D."/>
            <person name="Jesse T."/>
            <person name="Heijnen L."/>
            <person name="Schwarz S."/>
            <person name="Scholler P."/>
            <person name="Heber S."/>
            <person name="Francs P."/>
            <person name="Bielke C."/>
            <person name="Frishman D."/>
            <person name="Haase D."/>
            <person name="Lemcke K."/>
            <person name="Mewes H.-W."/>
            <person name="Stocker S."/>
            <person name="Zaccaria P."/>
            <person name="Bevan M."/>
            <person name="Wilson R.K."/>
            <person name="de la Bastide M."/>
            <person name="Habermann K."/>
            <person name="Parnell L."/>
            <person name="Dedhia N."/>
            <person name="Gnoj L."/>
            <person name="Schutz K."/>
            <person name="Huang E."/>
            <person name="Spiegel L."/>
            <person name="Sekhon M."/>
            <person name="Murray J."/>
            <person name="Sheet P."/>
            <person name="Cordes M."/>
            <person name="Abu-Threideh J."/>
            <person name="Stoneking T."/>
            <person name="Kalicki J."/>
            <person name="Graves T."/>
            <person name="Harmon G."/>
            <person name="Edwards J."/>
            <person name="Latreille P."/>
            <person name="Courtney L."/>
            <person name="Cloud J."/>
            <person name="Abbott A."/>
            <person name="Scott K."/>
            <person name="Johnson D."/>
            <person name="Minx P."/>
            <person name="Bentley D."/>
            <person name="Fulton B."/>
            <person name="Miller N."/>
            <person name="Greco T."/>
            <person name="Kemp K."/>
            <person name="Kramer J."/>
            <person name="Fulton L."/>
            <person name="Mardis E."/>
            <person name="Dante M."/>
            <person name="Pepin K."/>
            <person name="Hillier L.W."/>
            <person name="Nelson J."/>
            <person name="Spieth J."/>
            <person name="Ryan E."/>
            <person name="Andrews S."/>
            <person name="Geisel C."/>
            <person name="Layman D."/>
            <person name="Du H."/>
            <person name="Ali J."/>
            <person name="Berghoff A."/>
            <person name="Jones K."/>
            <person name="Drone K."/>
            <person name="Cotton M."/>
            <person name="Joshu C."/>
            <person name="Antonoiu B."/>
            <person name="Zidanic M."/>
            <person name="Strong C."/>
            <person name="Sun H."/>
            <person name="Lamar B."/>
            <person name="Yordan C."/>
            <person name="Ma P."/>
            <person name="Zhong J."/>
            <person name="Preston R."/>
            <person name="Vil D."/>
            <person name="Shekher M."/>
            <person name="Matero A."/>
            <person name="Shah R."/>
            <person name="Swaby I.K."/>
            <person name="O'Shaughnessy A."/>
            <person name="Rodriguez M."/>
            <person name="Hoffman J."/>
            <person name="Till S."/>
            <person name="Granat S."/>
            <person name="Shohdy N."/>
            <person name="Hasegawa A."/>
            <person name="Hameed A."/>
            <person name="Lodhi M."/>
            <person name="Johnson A."/>
            <person name="Chen E."/>
            <person name="Marra M.A."/>
            <person name="Martienssen R."/>
            <person name="McCombie W.R."/>
        </authorList>
    </citation>
    <scope>NUCLEOTIDE SEQUENCE [LARGE SCALE GENOMIC DNA]</scope>
    <source>
        <strain>cv. Columbia</strain>
    </source>
</reference>
<reference key="2">
    <citation type="journal article" date="2017" name="Plant J.">
        <title>Araport11: a complete reannotation of the Arabidopsis thaliana reference genome.</title>
        <authorList>
            <person name="Cheng C.Y."/>
            <person name="Krishnakumar V."/>
            <person name="Chan A.P."/>
            <person name="Thibaud-Nissen F."/>
            <person name="Schobel S."/>
            <person name="Town C.D."/>
        </authorList>
    </citation>
    <scope>GENOME REANNOTATION</scope>
    <source>
        <strain>cv. Columbia</strain>
    </source>
</reference>
<reference key="3">
    <citation type="journal article" date="2003" name="Science">
        <title>Empirical analysis of transcriptional activity in the Arabidopsis genome.</title>
        <authorList>
            <person name="Yamada K."/>
            <person name="Lim J."/>
            <person name="Dale J.M."/>
            <person name="Chen H."/>
            <person name="Shinn P."/>
            <person name="Palm C.J."/>
            <person name="Southwick A.M."/>
            <person name="Wu H.C."/>
            <person name="Kim C.J."/>
            <person name="Nguyen M."/>
            <person name="Pham P.K."/>
            <person name="Cheuk R.F."/>
            <person name="Karlin-Newmann G."/>
            <person name="Liu S.X."/>
            <person name="Lam B."/>
            <person name="Sakano H."/>
            <person name="Wu T."/>
            <person name="Yu G."/>
            <person name="Miranda M."/>
            <person name="Quach H.L."/>
            <person name="Tripp M."/>
            <person name="Chang C.H."/>
            <person name="Lee J.M."/>
            <person name="Toriumi M.J."/>
            <person name="Chan M.M."/>
            <person name="Tang C.C."/>
            <person name="Onodera C.S."/>
            <person name="Deng J.M."/>
            <person name="Akiyama K."/>
            <person name="Ansari Y."/>
            <person name="Arakawa T."/>
            <person name="Banh J."/>
            <person name="Banno F."/>
            <person name="Bowser L."/>
            <person name="Brooks S.Y."/>
            <person name="Carninci P."/>
            <person name="Chao Q."/>
            <person name="Choy N."/>
            <person name="Enju A."/>
            <person name="Goldsmith A.D."/>
            <person name="Gurjal M."/>
            <person name="Hansen N.F."/>
            <person name="Hayashizaki Y."/>
            <person name="Johnson-Hopson C."/>
            <person name="Hsuan V.W."/>
            <person name="Iida K."/>
            <person name="Karnes M."/>
            <person name="Khan S."/>
            <person name="Koesema E."/>
            <person name="Ishida J."/>
            <person name="Jiang P.X."/>
            <person name="Jones T."/>
            <person name="Kawai J."/>
            <person name="Kamiya A."/>
            <person name="Meyers C."/>
            <person name="Nakajima M."/>
            <person name="Narusaka M."/>
            <person name="Seki M."/>
            <person name="Sakurai T."/>
            <person name="Satou M."/>
            <person name="Tamse R."/>
            <person name="Vaysberg M."/>
            <person name="Wallender E.K."/>
            <person name="Wong C."/>
            <person name="Yamamura Y."/>
            <person name="Yuan S."/>
            <person name="Shinozaki K."/>
            <person name="Davis R.W."/>
            <person name="Theologis A."/>
            <person name="Ecker J.R."/>
        </authorList>
    </citation>
    <scope>NUCLEOTIDE SEQUENCE [LARGE SCALE MRNA]</scope>
    <source>
        <strain>cv. Columbia</strain>
    </source>
</reference>
<reference key="4">
    <citation type="submission" date="2002-03" db="EMBL/GenBank/DDBJ databases">
        <title>Full-length cDNA from Arabidopsis thaliana.</title>
        <authorList>
            <person name="Brover V.V."/>
            <person name="Troukhan M.E."/>
            <person name="Alexandrov N.A."/>
            <person name="Lu Y.-P."/>
            <person name="Flavell R.B."/>
            <person name="Feldmann K.A."/>
        </authorList>
    </citation>
    <scope>NUCLEOTIDE SEQUENCE [LARGE SCALE MRNA]</scope>
</reference>
<reference key="5">
    <citation type="journal article" date="2000" name="Plant Cell">
        <title>A new family of high-affinity transporters for adenine, cytosine, and purine derivatives in Arabidopsis.</title>
        <authorList>
            <person name="Gillissen B."/>
            <person name="Buerkle L."/>
            <person name="Andre B."/>
            <person name="Kuehn C."/>
            <person name="Rentsch D."/>
            <person name="Brandl B."/>
            <person name="Frommer W.B."/>
        </authorList>
    </citation>
    <scope>GENE FAMILY</scope>
    <scope>NOMENCLATURE</scope>
</reference>
<accession>Q8RY83</accession>
<accession>Q9LDT1</accession>
<comment type="subcellular location">
    <subcellularLocation>
        <location evidence="2">Membrane</location>
        <topology evidence="2">Multi-pass membrane protein</topology>
    </subcellularLocation>
</comment>
<comment type="similarity">
    <text evidence="2">Belongs to the purine permeases (TC 2.A.7.14) family.</text>
</comment>
<comment type="sequence caution" evidence="2">
    <conflict type="erroneous gene model prediction">
        <sequence resource="EMBL-CDS" id="CAB77995"/>
    </conflict>
</comment>
<comment type="sequence caution" evidence="2">
    <conflict type="erroneous gene model prediction">
        <sequence resource="EMBL-CDS" id="CAB82106"/>
    </conflict>
</comment>
<protein>
    <recommendedName>
        <fullName>Probable purine permease 13</fullName>
        <shortName>AtPUP13</shortName>
    </recommendedName>
</protein>
<gene>
    <name type="primary">PUP13</name>
    <name type="ordered locus">At4g08700</name>
    <name type="ORF">T32A17.10</name>
</gene>
<proteinExistence type="evidence at transcript level"/>
<evidence type="ECO:0000255" key="1"/>
<evidence type="ECO:0000305" key="2"/>
<sequence length="361" mass="40138">MDEEEAMLLLKEEDEGTRRTSVPTQLMKLKRTHWWILVFISIFFLISAQAIAVLLGRFYYNEGGNSKWISTLVQTCGFPILYLPLCFLPASHSSSSSCSFKTLVWIYLSLGFAIGLDNLLYSFGLLYLSASTYSILCSSQLAFNGVFSYYINSQKITCLILFSVLFLSVSAVLVSLDDDSNSPSGDSKWSYLIGCLCTVFASLIYSLQLSLMQFSFENVLKSETFSMVLEMQIYTSLVASCVAVIGLFASGEWMLLSVEMEEFHEGQVIYVLTLVGTAVSWQLGSVGAVALIFLVSSLFSNLIGTLSLIVTPLAAIAVFHDKLTEVKMVAMLIAFMGFGFYIYQNYLDDLKVQRAREAQAE</sequence>
<dbReference type="EMBL" id="AL161512">
    <property type="protein sequence ID" value="CAB77995.1"/>
    <property type="status" value="ALT_SEQ"/>
    <property type="molecule type" value="Genomic_DNA"/>
</dbReference>
<dbReference type="EMBL" id="AL161813">
    <property type="protein sequence ID" value="CAB82106.1"/>
    <property type="status" value="ALT_SEQ"/>
    <property type="molecule type" value="Genomic_DNA"/>
</dbReference>
<dbReference type="EMBL" id="CP002687">
    <property type="protein sequence ID" value="AEE82672.1"/>
    <property type="molecule type" value="Genomic_DNA"/>
</dbReference>
<dbReference type="EMBL" id="AY074535">
    <property type="protein sequence ID" value="AAL69503.1"/>
    <property type="molecule type" value="mRNA"/>
</dbReference>
<dbReference type="EMBL" id="AY096468">
    <property type="protein sequence ID" value="AAM20108.1"/>
    <property type="molecule type" value="mRNA"/>
</dbReference>
<dbReference type="EMBL" id="AY087844">
    <property type="protein sequence ID" value="AAM65397.1"/>
    <property type="molecule type" value="mRNA"/>
</dbReference>
<dbReference type="PIR" id="C85087">
    <property type="entry name" value="C85087"/>
</dbReference>
<dbReference type="RefSeq" id="NP_567339.1">
    <property type="nucleotide sequence ID" value="NM_116940.2"/>
</dbReference>
<dbReference type="SMR" id="Q8RY83"/>
<dbReference type="BioGRID" id="11737">
    <property type="interactions" value="1"/>
</dbReference>
<dbReference type="FunCoup" id="Q8RY83">
    <property type="interactions" value="11"/>
</dbReference>
<dbReference type="STRING" id="3702.Q8RY83"/>
<dbReference type="PaxDb" id="3702-AT4G08700.1"/>
<dbReference type="EnsemblPlants" id="AT4G08700.1">
    <property type="protein sequence ID" value="AT4G08700.1"/>
    <property type="gene ID" value="AT4G08700"/>
</dbReference>
<dbReference type="GeneID" id="826438"/>
<dbReference type="Gramene" id="AT4G08700.1">
    <property type="protein sequence ID" value="AT4G08700.1"/>
    <property type="gene ID" value="AT4G08700"/>
</dbReference>
<dbReference type="KEGG" id="ath:AT4G08700"/>
<dbReference type="Araport" id="AT4G08700"/>
<dbReference type="TAIR" id="AT4G08700">
    <property type="gene designation" value="PUP13"/>
</dbReference>
<dbReference type="eggNOG" id="ENOG502QRUH">
    <property type="taxonomic scope" value="Eukaryota"/>
</dbReference>
<dbReference type="HOGENOM" id="CLU_043459_2_1_1"/>
<dbReference type="InParanoid" id="Q8RY83"/>
<dbReference type="OMA" id="SLMQYSF"/>
<dbReference type="PhylomeDB" id="Q8RY83"/>
<dbReference type="PRO" id="PR:Q8RY83"/>
<dbReference type="Proteomes" id="UP000006548">
    <property type="component" value="Chromosome 4"/>
</dbReference>
<dbReference type="ExpressionAtlas" id="Q8RY83">
    <property type="expression patterns" value="baseline and differential"/>
</dbReference>
<dbReference type="GO" id="GO:0016020">
    <property type="term" value="C:membrane"/>
    <property type="evidence" value="ECO:0000304"/>
    <property type="project" value="TAIR"/>
</dbReference>
<dbReference type="GO" id="GO:0005345">
    <property type="term" value="F:purine nucleobase transmembrane transporter activity"/>
    <property type="evidence" value="ECO:0000304"/>
    <property type="project" value="TAIR"/>
</dbReference>
<dbReference type="GO" id="GO:0015211">
    <property type="term" value="F:purine nucleoside transmembrane transporter activity"/>
    <property type="evidence" value="ECO:0007669"/>
    <property type="project" value="InterPro"/>
</dbReference>
<dbReference type="GO" id="GO:0006863">
    <property type="term" value="P:purine nucleobase transport"/>
    <property type="evidence" value="ECO:0000304"/>
    <property type="project" value="TAIR"/>
</dbReference>
<dbReference type="InterPro" id="IPR030182">
    <property type="entry name" value="PUP_plant"/>
</dbReference>
<dbReference type="PANTHER" id="PTHR31376">
    <property type="entry name" value="OS09G0467300 PROTEIN-RELATED"/>
    <property type="match status" value="1"/>
</dbReference>
<dbReference type="PANTHER" id="PTHR31376:SF58">
    <property type="entry name" value="PURINE PERMEASE 12-RELATED"/>
    <property type="match status" value="1"/>
</dbReference>
<dbReference type="Pfam" id="PF16913">
    <property type="entry name" value="PUNUT"/>
    <property type="match status" value="1"/>
</dbReference>
<dbReference type="SUPFAM" id="SSF103481">
    <property type="entry name" value="Multidrug resistance efflux transporter EmrE"/>
    <property type="match status" value="1"/>
</dbReference>